<dbReference type="EC" id="2.4.2.9" evidence="1"/>
<dbReference type="EMBL" id="CP000821">
    <property type="protein sequence ID" value="ABV36457.1"/>
    <property type="molecule type" value="Genomic_DNA"/>
</dbReference>
<dbReference type="RefSeq" id="WP_012142193.1">
    <property type="nucleotide sequence ID" value="NC_009831.1"/>
</dbReference>
<dbReference type="SMR" id="A8FUD4"/>
<dbReference type="STRING" id="425104.Ssed_1846"/>
<dbReference type="KEGG" id="sse:Ssed_1846"/>
<dbReference type="eggNOG" id="COG0035">
    <property type="taxonomic scope" value="Bacteria"/>
</dbReference>
<dbReference type="HOGENOM" id="CLU_067096_2_2_6"/>
<dbReference type="OrthoDB" id="9781675at2"/>
<dbReference type="UniPathway" id="UPA00574">
    <property type="reaction ID" value="UER00636"/>
</dbReference>
<dbReference type="Proteomes" id="UP000002015">
    <property type="component" value="Chromosome"/>
</dbReference>
<dbReference type="GO" id="GO:0005525">
    <property type="term" value="F:GTP binding"/>
    <property type="evidence" value="ECO:0007669"/>
    <property type="project" value="UniProtKB-KW"/>
</dbReference>
<dbReference type="GO" id="GO:0000287">
    <property type="term" value="F:magnesium ion binding"/>
    <property type="evidence" value="ECO:0007669"/>
    <property type="project" value="UniProtKB-UniRule"/>
</dbReference>
<dbReference type="GO" id="GO:0004845">
    <property type="term" value="F:uracil phosphoribosyltransferase activity"/>
    <property type="evidence" value="ECO:0007669"/>
    <property type="project" value="UniProtKB-UniRule"/>
</dbReference>
<dbReference type="GO" id="GO:0044206">
    <property type="term" value="P:UMP salvage"/>
    <property type="evidence" value="ECO:0007669"/>
    <property type="project" value="UniProtKB-UniRule"/>
</dbReference>
<dbReference type="GO" id="GO:0006223">
    <property type="term" value="P:uracil salvage"/>
    <property type="evidence" value="ECO:0007669"/>
    <property type="project" value="InterPro"/>
</dbReference>
<dbReference type="CDD" id="cd06223">
    <property type="entry name" value="PRTases_typeI"/>
    <property type="match status" value="1"/>
</dbReference>
<dbReference type="FunFam" id="3.40.50.2020:FF:000003">
    <property type="entry name" value="Uracil phosphoribosyltransferase"/>
    <property type="match status" value="1"/>
</dbReference>
<dbReference type="Gene3D" id="3.40.50.2020">
    <property type="match status" value="1"/>
</dbReference>
<dbReference type="HAMAP" id="MF_01218_B">
    <property type="entry name" value="Upp_B"/>
    <property type="match status" value="1"/>
</dbReference>
<dbReference type="InterPro" id="IPR000836">
    <property type="entry name" value="PRibTrfase_dom"/>
</dbReference>
<dbReference type="InterPro" id="IPR029057">
    <property type="entry name" value="PRTase-like"/>
</dbReference>
<dbReference type="InterPro" id="IPR034332">
    <property type="entry name" value="Upp_B"/>
</dbReference>
<dbReference type="InterPro" id="IPR050054">
    <property type="entry name" value="UPRTase/APRTase"/>
</dbReference>
<dbReference type="InterPro" id="IPR005765">
    <property type="entry name" value="Ura_phspho_trans"/>
</dbReference>
<dbReference type="NCBIfam" id="NF001097">
    <property type="entry name" value="PRK00129.1"/>
    <property type="match status" value="1"/>
</dbReference>
<dbReference type="NCBIfam" id="TIGR01091">
    <property type="entry name" value="upp"/>
    <property type="match status" value="1"/>
</dbReference>
<dbReference type="PANTHER" id="PTHR32315">
    <property type="entry name" value="ADENINE PHOSPHORIBOSYLTRANSFERASE"/>
    <property type="match status" value="1"/>
</dbReference>
<dbReference type="PANTHER" id="PTHR32315:SF4">
    <property type="entry name" value="URACIL PHOSPHORIBOSYLTRANSFERASE, CHLOROPLASTIC"/>
    <property type="match status" value="1"/>
</dbReference>
<dbReference type="Pfam" id="PF14681">
    <property type="entry name" value="UPRTase"/>
    <property type="match status" value="1"/>
</dbReference>
<dbReference type="SUPFAM" id="SSF53271">
    <property type="entry name" value="PRTase-like"/>
    <property type="match status" value="1"/>
</dbReference>
<keyword id="KW-0021">Allosteric enzyme</keyword>
<keyword id="KW-0328">Glycosyltransferase</keyword>
<keyword id="KW-0342">GTP-binding</keyword>
<keyword id="KW-0460">Magnesium</keyword>
<keyword id="KW-0547">Nucleotide-binding</keyword>
<keyword id="KW-1185">Reference proteome</keyword>
<keyword id="KW-0808">Transferase</keyword>
<protein>
    <recommendedName>
        <fullName evidence="1">Uracil phosphoribosyltransferase</fullName>
        <ecNumber evidence="1">2.4.2.9</ecNumber>
    </recommendedName>
    <alternativeName>
        <fullName evidence="1">UMP pyrophosphorylase</fullName>
    </alternativeName>
    <alternativeName>
        <fullName evidence="1">UPRTase</fullName>
    </alternativeName>
</protein>
<reference key="1">
    <citation type="submission" date="2007-08" db="EMBL/GenBank/DDBJ databases">
        <title>Complete sequence of Shewanella sediminis HAW-EB3.</title>
        <authorList>
            <consortium name="US DOE Joint Genome Institute"/>
            <person name="Copeland A."/>
            <person name="Lucas S."/>
            <person name="Lapidus A."/>
            <person name="Barry K."/>
            <person name="Glavina del Rio T."/>
            <person name="Dalin E."/>
            <person name="Tice H."/>
            <person name="Pitluck S."/>
            <person name="Chertkov O."/>
            <person name="Brettin T."/>
            <person name="Bruce D."/>
            <person name="Detter J.C."/>
            <person name="Han C."/>
            <person name="Schmutz J."/>
            <person name="Larimer F."/>
            <person name="Land M."/>
            <person name="Hauser L."/>
            <person name="Kyrpides N."/>
            <person name="Kim E."/>
            <person name="Zhao J.-S."/>
            <person name="Richardson P."/>
        </authorList>
    </citation>
    <scope>NUCLEOTIDE SEQUENCE [LARGE SCALE GENOMIC DNA]</scope>
    <source>
        <strain>HAW-EB3</strain>
    </source>
</reference>
<name>UPP_SHESH</name>
<accession>A8FUD4</accession>
<organism>
    <name type="scientific">Shewanella sediminis (strain HAW-EB3)</name>
    <dbReference type="NCBI Taxonomy" id="425104"/>
    <lineage>
        <taxon>Bacteria</taxon>
        <taxon>Pseudomonadati</taxon>
        <taxon>Pseudomonadota</taxon>
        <taxon>Gammaproteobacteria</taxon>
        <taxon>Alteromonadales</taxon>
        <taxon>Shewanellaceae</taxon>
        <taxon>Shewanella</taxon>
    </lineage>
</organism>
<gene>
    <name evidence="1" type="primary">upp</name>
    <name type="ordered locus">Ssed_1846</name>
</gene>
<sequence>MKVVEVKHPLVRHKIGLMRAGDISTKRFRELAAEVGSLLTYEATADFATETVTIEGWNGPVEIEQIKGKKVTVVPILRAGLGMMDGVLENIPSARISVVGMYRDEETLEPVPYFEKLASDMPSRIALVVDPMLATGGSMISTIDLLKDRGCTEIKALVLVAAPEGVEALQKAHPDVELYTASIDRCLNEQGYILPGLGDAGDKIFGTK</sequence>
<comment type="function">
    <text evidence="1">Catalyzes the conversion of uracil and 5-phospho-alpha-D-ribose 1-diphosphate (PRPP) to UMP and diphosphate.</text>
</comment>
<comment type="catalytic activity">
    <reaction evidence="1">
        <text>UMP + diphosphate = 5-phospho-alpha-D-ribose 1-diphosphate + uracil</text>
        <dbReference type="Rhea" id="RHEA:13017"/>
        <dbReference type="ChEBI" id="CHEBI:17568"/>
        <dbReference type="ChEBI" id="CHEBI:33019"/>
        <dbReference type="ChEBI" id="CHEBI:57865"/>
        <dbReference type="ChEBI" id="CHEBI:58017"/>
        <dbReference type="EC" id="2.4.2.9"/>
    </reaction>
</comment>
<comment type="cofactor">
    <cofactor evidence="1">
        <name>Mg(2+)</name>
        <dbReference type="ChEBI" id="CHEBI:18420"/>
    </cofactor>
    <text evidence="1">Binds 1 Mg(2+) ion per subunit. The magnesium is bound as Mg-PRPP.</text>
</comment>
<comment type="activity regulation">
    <text evidence="1">Allosterically activated by GTP.</text>
</comment>
<comment type="pathway">
    <text evidence="1">Pyrimidine metabolism; UMP biosynthesis via salvage pathway; UMP from uracil: step 1/1.</text>
</comment>
<comment type="similarity">
    <text evidence="1">Belongs to the UPRTase family.</text>
</comment>
<evidence type="ECO:0000255" key="1">
    <source>
        <dbReference type="HAMAP-Rule" id="MF_01218"/>
    </source>
</evidence>
<proteinExistence type="inferred from homology"/>
<feature type="chain" id="PRO_1000085641" description="Uracil phosphoribosyltransferase">
    <location>
        <begin position="1"/>
        <end position="208"/>
    </location>
</feature>
<feature type="binding site" evidence="1">
    <location>
        <position position="78"/>
    </location>
    <ligand>
        <name>5-phospho-alpha-D-ribose 1-diphosphate</name>
        <dbReference type="ChEBI" id="CHEBI:58017"/>
    </ligand>
</feature>
<feature type="binding site" evidence="1">
    <location>
        <position position="103"/>
    </location>
    <ligand>
        <name>5-phospho-alpha-D-ribose 1-diphosphate</name>
        <dbReference type="ChEBI" id="CHEBI:58017"/>
    </ligand>
</feature>
<feature type="binding site" evidence="1">
    <location>
        <begin position="130"/>
        <end position="138"/>
    </location>
    <ligand>
        <name>5-phospho-alpha-D-ribose 1-diphosphate</name>
        <dbReference type="ChEBI" id="CHEBI:58017"/>
    </ligand>
</feature>
<feature type="binding site" evidence="1">
    <location>
        <position position="193"/>
    </location>
    <ligand>
        <name>uracil</name>
        <dbReference type="ChEBI" id="CHEBI:17568"/>
    </ligand>
</feature>
<feature type="binding site" evidence="1">
    <location>
        <begin position="198"/>
        <end position="200"/>
    </location>
    <ligand>
        <name>uracil</name>
        <dbReference type="ChEBI" id="CHEBI:17568"/>
    </ligand>
</feature>
<feature type="binding site" evidence="1">
    <location>
        <position position="199"/>
    </location>
    <ligand>
        <name>5-phospho-alpha-D-ribose 1-diphosphate</name>
        <dbReference type="ChEBI" id="CHEBI:58017"/>
    </ligand>
</feature>